<evidence type="ECO:0000250" key="1"/>
<evidence type="ECO:0000256" key="2">
    <source>
        <dbReference type="SAM" id="MobiDB-lite"/>
    </source>
</evidence>
<evidence type="ECO:0000305" key="3"/>
<name>RR4_CYCTA</name>
<feature type="chain" id="PRO_0000322369" description="Small ribosomal subunit protein uS4c">
    <location>
        <begin position="1"/>
        <end position="201"/>
    </location>
</feature>
<feature type="domain" description="S4 RNA-binding">
    <location>
        <begin position="89"/>
        <end position="157"/>
    </location>
</feature>
<feature type="region of interest" description="Disordered" evidence="2">
    <location>
        <begin position="20"/>
        <end position="43"/>
    </location>
</feature>
<feature type="compositionally biased region" description="Polar residues" evidence="2">
    <location>
        <begin position="31"/>
        <end position="41"/>
    </location>
</feature>
<geneLocation type="chloroplast"/>
<protein>
    <recommendedName>
        <fullName evidence="3">Small ribosomal subunit protein uS4c</fullName>
    </recommendedName>
    <alternativeName>
        <fullName>30S ribosomal protein S4, chloroplastic</fullName>
    </alternativeName>
</protein>
<sequence length="201" mass="23579">MSRYRGPRLKIIRRLRTLPGLTNKRPKSRNDPTNQSSSRKISQYRIRPEEKQKLRFHYGLTERQLLKYVRIAGRAKGSTGQILLQLLEMRLDNIIFRLGMALTIPGARQLVNHRHILVNDRVVDIPSYRCKPRDVITIIDQRRSRAMIGKNLDLSQKDQMPNHLTLHSSQYKGLVNQIIDSKWISLKINELLVVEYYSRQA</sequence>
<comment type="function">
    <text evidence="1">One of the primary rRNA binding proteins, it binds directly to 16S rRNA where it nucleates assembly of the body of the 30S subunit.</text>
</comment>
<comment type="function">
    <text evidence="1">With S5 and S12 plays an important role in translational accuracy.</text>
</comment>
<comment type="subunit">
    <text evidence="1">Part of the 30S ribosomal subunit. Contacts protein S5. The interaction surface between S4 and S5 is involved in control of translational fidelity (By similarity).</text>
</comment>
<comment type="subcellular location">
    <subcellularLocation>
        <location>Plastid</location>
        <location>Chloroplast</location>
    </subcellularLocation>
</comment>
<comment type="similarity">
    <text evidence="3">Belongs to the universal ribosomal protein uS4 family.</text>
</comment>
<organism>
    <name type="scientific">Cycas taitungensis</name>
    <name type="common">Prince sago</name>
    <name type="synonym">Cycas taiwaniana</name>
    <dbReference type="NCBI Taxonomy" id="54799"/>
    <lineage>
        <taxon>Eukaryota</taxon>
        <taxon>Viridiplantae</taxon>
        <taxon>Streptophyta</taxon>
        <taxon>Embryophyta</taxon>
        <taxon>Tracheophyta</taxon>
        <taxon>Spermatophyta</taxon>
        <taxon>Cycadidae</taxon>
        <taxon>Cycadales</taxon>
        <taxon>Cycadaceae</taxon>
        <taxon>Cycas</taxon>
    </lineage>
</organism>
<keyword id="KW-0150">Chloroplast</keyword>
<keyword id="KW-0934">Plastid</keyword>
<keyword id="KW-0687">Ribonucleoprotein</keyword>
<keyword id="KW-0689">Ribosomal protein</keyword>
<keyword id="KW-0694">RNA-binding</keyword>
<keyword id="KW-0699">rRNA-binding</keyword>
<dbReference type="EMBL" id="AP009339">
    <property type="protein sequence ID" value="BAF64941.1"/>
    <property type="molecule type" value="Genomic_DNA"/>
</dbReference>
<dbReference type="RefSeq" id="YP_001312200.1">
    <property type="nucleotide sequence ID" value="NC_009618.1"/>
</dbReference>
<dbReference type="SMR" id="A6H5H5"/>
<dbReference type="GeneID" id="5309533"/>
<dbReference type="GO" id="GO:0009507">
    <property type="term" value="C:chloroplast"/>
    <property type="evidence" value="ECO:0007669"/>
    <property type="project" value="UniProtKB-SubCell"/>
</dbReference>
<dbReference type="GO" id="GO:0015935">
    <property type="term" value="C:small ribosomal subunit"/>
    <property type="evidence" value="ECO:0007669"/>
    <property type="project" value="InterPro"/>
</dbReference>
<dbReference type="GO" id="GO:0019843">
    <property type="term" value="F:rRNA binding"/>
    <property type="evidence" value="ECO:0007669"/>
    <property type="project" value="UniProtKB-UniRule"/>
</dbReference>
<dbReference type="GO" id="GO:0003735">
    <property type="term" value="F:structural constituent of ribosome"/>
    <property type="evidence" value="ECO:0007669"/>
    <property type="project" value="InterPro"/>
</dbReference>
<dbReference type="GO" id="GO:0042274">
    <property type="term" value="P:ribosomal small subunit biogenesis"/>
    <property type="evidence" value="ECO:0007669"/>
    <property type="project" value="TreeGrafter"/>
</dbReference>
<dbReference type="GO" id="GO:0006412">
    <property type="term" value="P:translation"/>
    <property type="evidence" value="ECO:0007669"/>
    <property type="project" value="UniProtKB-UniRule"/>
</dbReference>
<dbReference type="CDD" id="cd00165">
    <property type="entry name" value="S4"/>
    <property type="match status" value="1"/>
</dbReference>
<dbReference type="FunFam" id="1.10.1050.10:FF:000002">
    <property type="entry name" value="30S ribosomal protein S4, chloroplastic"/>
    <property type="match status" value="1"/>
</dbReference>
<dbReference type="FunFam" id="3.10.290.10:FF:000081">
    <property type="entry name" value="30S ribosomal protein S4, chloroplastic"/>
    <property type="match status" value="1"/>
</dbReference>
<dbReference type="Gene3D" id="1.10.1050.10">
    <property type="entry name" value="Ribosomal Protein S4 Delta 41, Chain A, domain 1"/>
    <property type="match status" value="1"/>
</dbReference>
<dbReference type="Gene3D" id="3.10.290.10">
    <property type="entry name" value="RNA-binding S4 domain"/>
    <property type="match status" value="1"/>
</dbReference>
<dbReference type="HAMAP" id="MF_01306_B">
    <property type="entry name" value="Ribosomal_uS4_B"/>
    <property type="match status" value="1"/>
</dbReference>
<dbReference type="InterPro" id="IPR022801">
    <property type="entry name" value="Ribosomal_uS4"/>
</dbReference>
<dbReference type="InterPro" id="IPR005709">
    <property type="entry name" value="Ribosomal_uS4_bac-type"/>
</dbReference>
<dbReference type="InterPro" id="IPR018079">
    <property type="entry name" value="Ribosomal_uS4_CS"/>
</dbReference>
<dbReference type="InterPro" id="IPR001912">
    <property type="entry name" value="Ribosomal_uS4_N"/>
</dbReference>
<dbReference type="InterPro" id="IPR002942">
    <property type="entry name" value="S4_RNA-bd"/>
</dbReference>
<dbReference type="InterPro" id="IPR036986">
    <property type="entry name" value="S4_RNA-bd_sf"/>
</dbReference>
<dbReference type="NCBIfam" id="NF003717">
    <property type="entry name" value="PRK05327.1"/>
    <property type="match status" value="1"/>
</dbReference>
<dbReference type="NCBIfam" id="TIGR01017">
    <property type="entry name" value="rpsD_bact"/>
    <property type="match status" value="1"/>
</dbReference>
<dbReference type="PANTHER" id="PTHR11831">
    <property type="entry name" value="30S 40S RIBOSOMAL PROTEIN"/>
    <property type="match status" value="1"/>
</dbReference>
<dbReference type="PANTHER" id="PTHR11831:SF4">
    <property type="entry name" value="SMALL RIBOSOMAL SUBUNIT PROTEIN US4M"/>
    <property type="match status" value="1"/>
</dbReference>
<dbReference type="Pfam" id="PF00163">
    <property type="entry name" value="Ribosomal_S4"/>
    <property type="match status" value="1"/>
</dbReference>
<dbReference type="Pfam" id="PF01479">
    <property type="entry name" value="S4"/>
    <property type="match status" value="1"/>
</dbReference>
<dbReference type="SMART" id="SM01390">
    <property type="entry name" value="Ribosomal_S4"/>
    <property type="match status" value="1"/>
</dbReference>
<dbReference type="SMART" id="SM00363">
    <property type="entry name" value="S4"/>
    <property type="match status" value="1"/>
</dbReference>
<dbReference type="SUPFAM" id="SSF55174">
    <property type="entry name" value="Alpha-L RNA-binding motif"/>
    <property type="match status" value="1"/>
</dbReference>
<dbReference type="PROSITE" id="PS00632">
    <property type="entry name" value="RIBOSOMAL_S4"/>
    <property type="match status" value="1"/>
</dbReference>
<dbReference type="PROSITE" id="PS50889">
    <property type="entry name" value="S4"/>
    <property type="match status" value="1"/>
</dbReference>
<proteinExistence type="inferred from homology"/>
<reference key="1">
    <citation type="journal article" date="2007" name="Mol. Biol. Evol.">
        <title>Chloroplast genome (cpDNA) of Cycas taitungensis and 56 cp protein-coding genes of Gnetum parvifolium: insights into cpDNA evolution and phylogeny of extant seed plants.</title>
        <authorList>
            <person name="Wu C.-S."/>
            <person name="Wang Y.-N."/>
            <person name="Liu S.-M."/>
            <person name="Chaw S.-M."/>
        </authorList>
    </citation>
    <scope>NUCLEOTIDE SEQUENCE [LARGE SCALE GENOMIC DNA]</scope>
</reference>
<accession>A6H5H5</accession>
<gene>
    <name type="primary">rps4</name>
</gene>